<accession>Q8RIH1</accession>
<feature type="chain" id="PRO_0000260871" description="Large ribosomal subunit protein uL6">
    <location>
        <begin position="1"/>
        <end position="177"/>
    </location>
</feature>
<feature type="region of interest" description="Disordered" evidence="2">
    <location>
        <begin position="151"/>
        <end position="177"/>
    </location>
</feature>
<feature type="compositionally biased region" description="Basic and acidic residues" evidence="2">
    <location>
        <begin position="152"/>
        <end position="177"/>
    </location>
</feature>
<proteinExistence type="inferred from homology"/>
<protein>
    <recommendedName>
        <fullName evidence="1">Large ribosomal subunit protein uL6</fullName>
    </recommendedName>
    <alternativeName>
        <fullName evidence="3">50S ribosomal protein L6</fullName>
    </alternativeName>
</protein>
<reference key="1">
    <citation type="journal article" date="2002" name="J. Bacteriol.">
        <title>Genome sequence and analysis of the oral bacterium Fusobacterium nucleatum strain ATCC 25586.</title>
        <authorList>
            <person name="Kapatral V."/>
            <person name="Anderson I."/>
            <person name="Ivanova N."/>
            <person name="Reznik G."/>
            <person name="Los T."/>
            <person name="Lykidis A."/>
            <person name="Bhattacharyya A."/>
            <person name="Bartman A."/>
            <person name="Gardner W."/>
            <person name="Grechkin G."/>
            <person name="Zhu L."/>
            <person name="Vasieva O."/>
            <person name="Chu L."/>
            <person name="Kogan Y."/>
            <person name="Chaga O."/>
            <person name="Goltsman E."/>
            <person name="Bernal A."/>
            <person name="Larsen N."/>
            <person name="D'Souza M."/>
            <person name="Walunas T."/>
            <person name="Pusch G."/>
            <person name="Haselkorn R."/>
            <person name="Fonstein M."/>
            <person name="Kyrpides N.C."/>
            <person name="Overbeek R."/>
        </authorList>
    </citation>
    <scope>NUCLEOTIDE SEQUENCE [LARGE SCALE GENOMIC DNA]</scope>
    <source>
        <strain>ATCC 25586 / DSM 15643 / BCRC 10681 / CIP 101130 / JCM 8532 / KCTC 2640 / LMG 13131 / VPI 4355</strain>
    </source>
</reference>
<evidence type="ECO:0000255" key="1">
    <source>
        <dbReference type="HAMAP-Rule" id="MF_01365"/>
    </source>
</evidence>
<evidence type="ECO:0000256" key="2">
    <source>
        <dbReference type="SAM" id="MobiDB-lite"/>
    </source>
</evidence>
<evidence type="ECO:0000305" key="3"/>
<comment type="function">
    <text evidence="1">This protein binds to the 23S rRNA, and is important in its secondary structure. It is located near the subunit interface in the base of the L7/L12 stalk, and near the tRNA binding site of the peptidyltransferase center.</text>
</comment>
<comment type="subunit">
    <text evidence="1">Part of the 50S ribosomal subunit.</text>
</comment>
<comment type="similarity">
    <text evidence="1">Belongs to the universal ribosomal protein uL6 family.</text>
</comment>
<dbReference type="EMBL" id="AE009951">
    <property type="protein sequence ID" value="AAL93744.1"/>
    <property type="molecule type" value="Genomic_DNA"/>
</dbReference>
<dbReference type="RefSeq" id="NP_602445.1">
    <property type="nucleotide sequence ID" value="NC_003454.1"/>
</dbReference>
<dbReference type="RefSeq" id="WP_005904134.1">
    <property type="nucleotide sequence ID" value="NZ_OZ209243.1"/>
</dbReference>
<dbReference type="SMR" id="Q8RIH1"/>
<dbReference type="FunCoup" id="Q8RIH1">
    <property type="interactions" value="379"/>
</dbReference>
<dbReference type="STRING" id="190304.FN1629"/>
<dbReference type="PaxDb" id="190304-FN1629"/>
<dbReference type="EnsemblBacteria" id="AAL93744">
    <property type="protein sequence ID" value="AAL93744"/>
    <property type="gene ID" value="FN1629"/>
</dbReference>
<dbReference type="GeneID" id="79782568"/>
<dbReference type="KEGG" id="fnu:FN1629"/>
<dbReference type="PATRIC" id="fig|190304.8.peg.122"/>
<dbReference type="eggNOG" id="COG0097">
    <property type="taxonomic scope" value="Bacteria"/>
</dbReference>
<dbReference type="HOGENOM" id="CLU_065464_1_2_0"/>
<dbReference type="InParanoid" id="Q8RIH1"/>
<dbReference type="BioCyc" id="FNUC190304:G1FZS-132-MONOMER"/>
<dbReference type="Proteomes" id="UP000002521">
    <property type="component" value="Chromosome"/>
</dbReference>
<dbReference type="GO" id="GO:0022625">
    <property type="term" value="C:cytosolic large ribosomal subunit"/>
    <property type="evidence" value="ECO:0000318"/>
    <property type="project" value="GO_Central"/>
</dbReference>
<dbReference type="GO" id="GO:0019843">
    <property type="term" value="F:rRNA binding"/>
    <property type="evidence" value="ECO:0007669"/>
    <property type="project" value="UniProtKB-UniRule"/>
</dbReference>
<dbReference type="GO" id="GO:0003735">
    <property type="term" value="F:structural constituent of ribosome"/>
    <property type="evidence" value="ECO:0000318"/>
    <property type="project" value="GO_Central"/>
</dbReference>
<dbReference type="GO" id="GO:0002181">
    <property type="term" value="P:cytoplasmic translation"/>
    <property type="evidence" value="ECO:0000318"/>
    <property type="project" value="GO_Central"/>
</dbReference>
<dbReference type="FunFam" id="3.90.930.12:FF:000001">
    <property type="entry name" value="50S ribosomal protein L6"/>
    <property type="match status" value="1"/>
</dbReference>
<dbReference type="FunFam" id="3.90.930.12:FF:000002">
    <property type="entry name" value="50S ribosomal protein L6"/>
    <property type="match status" value="1"/>
</dbReference>
<dbReference type="Gene3D" id="3.90.930.12">
    <property type="entry name" value="Ribosomal protein L6, alpha-beta domain"/>
    <property type="match status" value="2"/>
</dbReference>
<dbReference type="HAMAP" id="MF_01365_B">
    <property type="entry name" value="Ribosomal_uL6_B"/>
    <property type="match status" value="1"/>
</dbReference>
<dbReference type="InterPro" id="IPR000702">
    <property type="entry name" value="Ribosomal_uL6-like"/>
</dbReference>
<dbReference type="InterPro" id="IPR036789">
    <property type="entry name" value="Ribosomal_uL6-like_a/b-dom_sf"/>
</dbReference>
<dbReference type="InterPro" id="IPR020040">
    <property type="entry name" value="Ribosomal_uL6_a/b-dom"/>
</dbReference>
<dbReference type="InterPro" id="IPR019906">
    <property type="entry name" value="Ribosomal_uL6_bac-type"/>
</dbReference>
<dbReference type="InterPro" id="IPR002358">
    <property type="entry name" value="Ribosomal_uL6_CS"/>
</dbReference>
<dbReference type="NCBIfam" id="TIGR03654">
    <property type="entry name" value="L6_bact"/>
    <property type="match status" value="1"/>
</dbReference>
<dbReference type="PANTHER" id="PTHR11655">
    <property type="entry name" value="60S/50S RIBOSOMAL PROTEIN L6/L9"/>
    <property type="match status" value="1"/>
</dbReference>
<dbReference type="PANTHER" id="PTHR11655:SF14">
    <property type="entry name" value="LARGE RIBOSOMAL SUBUNIT PROTEIN UL6M"/>
    <property type="match status" value="1"/>
</dbReference>
<dbReference type="Pfam" id="PF00347">
    <property type="entry name" value="Ribosomal_L6"/>
    <property type="match status" value="2"/>
</dbReference>
<dbReference type="PIRSF" id="PIRSF002162">
    <property type="entry name" value="Ribosomal_L6"/>
    <property type="match status" value="1"/>
</dbReference>
<dbReference type="PRINTS" id="PR00059">
    <property type="entry name" value="RIBOSOMALL6"/>
</dbReference>
<dbReference type="SUPFAM" id="SSF56053">
    <property type="entry name" value="Ribosomal protein L6"/>
    <property type="match status" value="2"/>
</dbReference>
<dbReference type="PROSITE" id="PS00525">
    <property type="entry name" value="RIBOSOMAL_L6_1"/>
    <property type="match status" value="1"/>
</dbReference>
<gene>
    <name evidence="1" type="primary">rplF</name>
    <name type="ordered locus">FN1629</name>
</gene>
<name>RL6_FUSNN</name>
<sequence>MSRVGKKPIAVPSGVDFSVKDNVVTVKGPKGTLTKEFNNNITIKLEDGHITVERPNDEPFMRAIHGTTRALINNMVKGVHEGYRKTLTLVGVGYRAATKGKGLEISLGYSHPVIIDEIPGITFSVEKNTTIHIDGVEKELVGQVAANIRAKRPPEPYKGKGVKYADEHIRRKEGKKS</sequence>
<keyword id="KW-1185">Reference proteome</keyword>
<keyword id="KW-0687">Ribonucleoprotein</keyword>
<keyword id="KW-0689">Ribosomal protein</keyword>
<keyword id="KW-0694">RNA-binding</keyword>
<keyword id="KW-0699">rRNA-binding</keyword>
<organism>
    <name type="scientific">Fusobacterium nucleatum subsp. nucleatum (strain ATCC 25586 / DSM 15643 / BCRC 10681 / CIP 101130 / JCM 8532 / KCTC 2640 / LMG 13131 / VPI 4355)</name>
    <dbReference type="NCBI Taxonomy" id="190304"/>
    <lineage>
        <taxon>Bacteria</taxon>
        <taxon>Fusobacteriati</taxon>
        <taxon>Fusobacteriota</taxon>
        <taxon>Fusobacteriia</taxon>
        <taxon>Fusobacteriales</taxon>
        <taxon>Fusobacteriaceae</taxon>
        <taxon>Fusobacterium</taxon>
    </lineage>
</organism>